<evidence type="ECO:0000255" key="1">
    <source>
        <dbReference type="HAMAP-Rule" id="MF_01589"/>
    </source>
</evidence>
<sequence length="246" mass="27510">MTDRDTLFSAPIASLGDWTFDERVAEVFPDMIQRSVPGYSNIISMIGMLAERFVQPGTQVYDLGCSLGAATLSVRRNVHHQGCKIIAVDNSPAMVERCRRHLDAYKAPTPVDVIEGDIRTIEIKNASMVVLNFTLQFLEPDNRQLLLDKIYQGLNPGGALVLSEKFSFEDASVGELLFNMHHDFKRANGYSELEISQKRSMLENVMLTDSVEAHKARLHKAGFEHSELWFQCFNFGSLVALKGGQA</sequence>
<accession>A4WBM7</accession>
<reference key="1">
    <citation type="journal article" date="2010" name="PLoS Genet.">
        <title>Genome sequence of the plant growth promoting endophytic bacterium Enterobacter sp. 638.</title>
        <authorList>
            <person name="Taghavi S."/>
            <person name="van der Lelie D."/>
            <person name="Hoffman A."/>
            <person name="Zhang Y.B."/>
            <person name="Walla M.D."/>
            <person name="Vangronsveld J."/>
            <person name="Newman L."/>
            <person name="Monchy S."/>
        </authorList>
    </citation>
    <scope>NUCLEOTIDE SEQUENCE [LARGE SCALE GENOMIC DNA]</scope>
    <source>
        <strain>638</strain>
    </source>
</reference>
<keyword id="KW-0949">S-adenosyl-L-methionine</keyword>
<keyword id="KW-0808">Transferase</keyword>
<comment type="function">
    <text evidence="1">Catalyzes the conversion of S-adenosyl-L-methionine (SAM) to carboxy-S-adenosyl-L-methionine (Cx-SAM).</text>
</comment>
<comment type="catalytic activity">
    <reaction evidence="1">
        <text>prephenate + S-adenosyl-L-methionine = carboxy-S-adenosyl-L-methionine + 3-phenylpyruvate + H2O</text>
        <dbReference type="Rhea" id="RHEA:51692"/>
        <dbReference type="ChEBI" id="CHEBI:15377"/>
        <dbReference type="ChEBI" id="CHEBI:18005"/>
        <dbReference type="ChEBI" id="CHEBI:29934"/>
        <dbReference type="ChEBI" id="CHEBI:59789"/>
        <dbReference type="ChEBI" id="CHEBI:134278"/>
    </reaction>
</comment>
<comment type="subunit">
    <text evidence="1">Homodimer.</text>
</comment>
<comment type="similarity">
    <text evidence="1">Belongs to the class I-like SAM-binding methyltransferase superfamily. Cx-SAM synthase family.</text>
</comment>
<dbReference type="EC" id="2.1.3.-" evidence="1"/>
<dbReference type="EMBL" id="CP000653">
    <property type="protein sequence ID" value="ABP61107.1"/>
    <property type="molecule type" value="Genomic_DNA"/>
</dbReference>
<dbReference type="RefSeq" id="WP_015959440.1">
    <property type="nucleotide sequence ID" value="NC_009436.1"/>
</dbReference>
<dbReference type="SMR" id="A4WBM7"/>
<dbReference type="STRING" id="399742.Ent638_2438"/>
<dbReference type="KEGG" id="ent:Ent638_2438"/>
<dbReference type="eggNOG" id="COG2226">
    <property type="taxonomic scope" value="Bacteria"/>
</dbReference>
<dbReference type="HOGENOM" id="CLU_078475_0_0_6"/>
<dbReference type="OrthoDB" id="9779941at2"/>
<dbReference type="Proteomes" id="UP000000230">
    <property type="component" value="Chromosome"/>
</dbReference>
<dbReference type="GO" id="GO:0016743">
    <property type="term" value="F:carboxyl- or carbamoyltransferase activity"/>
    <property type="evidence" value="ECO:0007669"/>
    <property type="project" value="UniProtKB-UniRule"/>
</dbReference>
<dbReference type="GO" id="GO:1904047">
    <property type="term" value="F:S-adenosyl-L-methionine binding"/>
    <property type="evidence" value="ECO:0007669"/>
    <property type="project" value="UniProtKB-UniRule"/>
</dbReference>
<dbReference type="GO" id="GO:0002098">
    <property type="term" value="P:tRNA wobble uridine modification"/>
    <property type="evidence" value="ECO:0007669"/>
    <property type="project" value="InterPro"/>
</dbReference>
<dbReference type="CDD" id="cd02440">
    <property type="entry name" value="AdoMet_MTases"/>
    <property type="match status" value="1"/>
</dbReference>
<dbReference type="FunFam" id="3.40.50.150:FF:000030">
    <property type="entry name" value="Carboxy-S-adenosyl-L-methionine synthase"/>
    <property type="match status" value="1"/>
</dbReference>
<dbReference type="Gene3D" id="3.40.50.150">
    <property type="entry name" value="Vaccinia Virus protein VP39"/>
    <property type="match status" value="1"/>
</dbReference>
<dbReference type="HAMAP" id="MF_01589">
    <property type="entry name" value="Cx_SAM_synthase"/>
    <property type="match status" value="1"/>
</dbReference>
<dbReference type="InterPro" id="IPR005271">
    <property type="entry name" value="CmoA"/>
</dbReference>
<dbReference type="InterPro" id="IPR041698">
    <property type="entry name" value="Methyltransf_25"/>
</dbReference>
<dbReference type="InterPro" id="IPR029063">
    <property type="entry name" value="SAM-dependent_MTases_sf"/>
</dbReference>
<dbReference type="NCBIfam" id="TIGR00740">
    <property type="entry name" value="carboxy-S-adenosyl-L-methionine synthase CmoA"/>
    <property type="match status" value="1"/>
</dbReference>
<dbReference type="NCBIfam" id="NF011995">
    <property type="entry name" value="PRK15451.1"/>
    <property type="match status" value="1"/>
</dbReference>
<dbReference type="PANTHER" id="PTHR43861:SF2">
    <property type="entry name" value="CARBOXY-S-ADENOSYL-L-METHIONINE SYNTHASE"/>
    <property type="match status" value="1"/>
</dbReference>
<dbReference type="PANTHER" id="PTHR43861">
    <property type="entry name" value="TRANS-ACONITATE 2-METHYLTRANSFERASE-RELATED"/>
    <property type="match status" value="1"/>
</dbReference>
<dbReference type="Pfam" id="PF13649">
    <property type="entry name" value="Methyltransf_25"/>
    <property type="match status" value="1"/>
</dbReference>
<dbReference type="PIRSF" id="PIRSF006325">
    <property type="entry name" value="MeTrfase_bac"/>
    <property type="match status" value="1"/>
</dbReference>
<dbReference type="SUPFAM" id="SSF53335">
    <property type="entry name" value="S-adenosyl-L-methionine-dependent methyltransferases"/>
    <property type="match status" value="1"/>
</dbReference>
<organism>
    <name type="scientific">Enterobacter sp. (strain 638)</name>
    <dbReference type="NCBI Taxonomy" id="399742"/>
    <lineage>
        <taxon>Bacteria</taxon>
        <taxon>Pseudomonadati</taxon>
        <taxon>Pseudomonadota</taxon>
        <taxon>Gammaproteobacteria</taxon>
        <taxon>Enterobacterales</taxon>
        <taxon>Enterobacteriaceae</taxon>
        <taxon>Enterobacter</taxon>
    </lineage>
</organism>
<name>CMOA_ENT38</name>
<protein>
    <recommendedName>
        <fullName evidence="1">Carboxy-S-adenosyl-L-methionine synthase</fullName>
        <shortName evidence="1">Cx-SAM synthase</shortName>
        <ecNumber evidence="1">2.1.3.-</ecNumber>
    </recommendedName>
</protein>
<proteinExistence type="inferred from homology"/>
<feature type="chain" id="PRO_1000069322" description="Carboxy-S-adenosyl-L-methionine synthase">
    <location>
        <begin position="1"/>
        <end position="246"/>
    </location>
</feature>
<feature type="binding site" evidence="1">
    <location>
        <position position="39"/>
    </location>
    <ligand>
        <name>S-adenosyl-L-methionine</name>
        <dbReference type="ChEBI" id="CHEBI:59789"/>
    </ligand>
</feature>
<feature type="binding site" evidence="1">
    <location>
        <begin position="64"/>
        <end position="66"/>
    </location>
    <ligand>
        <name>S-adenosyl-L-methionine</name>
        <dbReference type="ChEBI" id="CHEBI:59789"/>
    </ligand>
</feature>
<feature type="binding site" evidence="1">
    <location>
        <begin position="89"/>
        <end position="90"/>
    </location>
    <ligand>
        <name>S-adenosyl-L-methionine</name>
        <dbReference type="ChEBI" id="CHEBI:59789"/>
    </ligand>
</feature>
<feature type="binding site" evidence="1">
    <location>
        <begin position="117"/>
        <end position="118"/>
    </location>
    <ligand>
        <name>S-adenosyl-L-methionine</name>
        <dbReference type="ChEBI" id="CHEBI:59789"/>
    </ligand>
</feature>
<feature type="binding site" evidence="1">
    <location>
        <position position="132"/>
    </location>
    <ligand>
        <name>S-adenosyl-L-methionine</name>
        <dbReference type="ChEBI" id="CHEBI:59789"/>
    </ligand>
</feature>
<feature type="binding site" evidence="1">
    <location>
        <position position="199"/>
    </location>
    <ligand>
        <name>S-adenosyl-L-methionine</name>
        <dbReference type="ChEBI" id="CHEBI:59789"/>
    </ligand>
</feature>
<gene>
    <name evidence="1" type="primary">cmoA</name>
    <name type="ordered locus">Ent638_2438</name>
</gene>